<sequence>MPRSVWKGPFCDNYVIKLARRARGNPNVLIKIRSRRSVILPAFVGYTFGVYNGKVFIPVKVNENMVGHKFGEFSPTRTFNGHSGDRKVNKK</sequence>
<comment type="function">
    <text evidence="1">Protein S19 forms a complex with S13 that binds strongly to the 16S ribosomal RNA.</text>
</comment>
<comment type="similarity">
    <text evidence="1">Belongs to the universal ribosomal protein uS19 family.</text>
</comment>
<evidence type="ECO:0000255" key="1">
    <source>
        <dbReference type="HAMAP-Rule" id="MF_00531"/>
    </source>
</evidence>
<evidence type="ECO:0000305" key="2"/>
<name>RS19_NEOSM</name>
<keyword id="KW-0687">Ribonucleoprotein</keyword>
<keyword id="KW-0689">Ribosomal protein</keyword>
<keyword id="KW-0694">RNA-binding</keyword>
<keyword id="KW-0699">rRNA-binding</keyword>
<reference key="1">
    <citation type="journal article" date="2006" name="PLoS Genet.">
        <title>Comparative genomics of emerging human ehrlichiosis agents.</title>
        <authorList>
            <person name="Dunning Hotopp J.C."/>
            <person name="Lin M."/>
            <person name="Madupu R."/>
            <person name="Crabtree J."/>
            <person name="Angiuoli S.V."/>
            <person name="Eisen J.A."/>
            <person name="Seshadri R."/>
            <person name="Ren Q."/>
            <person name="Wu M."/>
            <person name="Utterback T.R."/>
            <person name="Smith S."/>
            <person name="Lewis M."/>
            <person name="Khouri H."/>
            <person name="Zhang C."/>
            <person name="Niu H."/>
            <person name="Lin Q."/>
            <person name="Ohashi N."/>
            <person name="Zhi N."/>
            <person name="Nelson W.C."/>
            <person name="Brinkac L.M."/>
            <person name="Dodson R.J."/>
            <person name="Rosovitz M.J."/>
            <person name="Sundaram J.P."/>
            <person name="Daugherty S.C."/>
            <person name="Davidsen T."/>
            <person name="Durkin A.S."/>
            <person name="Gwinn M.L."/>
            <person name="Haft D.H."/>
            <person name="Selengut J.D."/>
            <person name="Sullivan S.A."/>
            <person name="Zafar N."/>
            <person name="Zhou L."/>
            <person name="Benahmed F."/>
            <person name="Forberger H."/>
            <person name="Halpin R."/>
            <person name="Mulligan S."/>
            <person name="Robinson J."/>
            <person name="White O."/>
            <person name="Rikihisa Y."/>
            <person name="Tettelin H."/>
        </authorList>
    </citation>
    <scope>NUCLEOTIDE SEQUENCE [LARGE SCALE GENOMIC DNA]</scope>
    <source>
        <strain>ATCC VR-367 / Miyayama</strain>
    </source>
</reference>
<organism>
    <name type="scientific">Neorickettsia sennetsu (strain ATCC VR-367 / Miyayama)</name>
    <name type="common">Ehrlichia sennetsu</name>
    <dbReference type="NCBI Taxonomy" id="222891"/>
    <lineage>
        <taxon>Bacteria</taxon>
        <taxon>Pseudomonadati</taxon>
        <taxon>Pseudomonadota</taxon>
        <taxon>Alphaproteobacteria</taxon>
        <taxon>Rickettsiales</taxon>
        <taxon>Anaplasmataceae</taxon>
        <taxon>Neorickettsia</taxon>
    </lineage>
</organism>
<feature type="chain" id="PRO_0000354296" description="Small ribosomal subunit protein uS19">
    <location>
        <begin position="1"/>
        <end position="91"/>
    </location>
</feature>
<dbReference type="EMBL" id="CP000237">
    <property type="protein sequence ID" value="ABD46024.1"/>
    <property type="molecule type" value="Genomic_DNA"/>
</dbReference>
<dbReference type="RefSeq" id="WP_011451667.1">
    <property type="nucleotide sequence ID" value="NC_007798.1"/>
</dbReference>
<dbReference type="SMR" id="Q2GED5"/>
<dbReference type="STRING" id="222891.NSE_0270"/>
<dbReference type="KEGG" id="nse:NSE_0270"/>
<dbReference type="eggNOG" id="COG0185">
    <property type="taxonomic scope" value="Bacteria"/>
</dbReference>
<dbReference type="HOGENOM" id="CLU_144911_0_1_5"/>
<dbReference type="OrthoDB" id="9797833at2"/>
<dbReference type="Proteomes" id="UP000001942">
    <property type="component" value="Chromosome"/>
</dbReference>
<dbReference type="GO" id="GO:0005737">
    <property type="term" value="C:cytoplasm"/>
    <property type="evidence" value="ECO:0007669"/>
    <property type="project" value="UniProtKB-ARBA"/>
</dbReference>
<dbReference type="GO" id="GO:0015935">
    <property type="term" value="C:small ribosomal subunit"/>
    <property type="evidence" value="ECO:0007669"/>
    <property type="project" value="InterPro"/>
</dbReference>
<dbReference type="GO" id="GO:0019843">
    <property type="term" value="F:rRNA binding"/>
    <property type="evidence" value="ECO:0007669"/>
    <property type="project" value="UniProtKB-UniRule"/>
</dbReference>
<dbReference type="GO" id="GO:0003735">
    <property type="term" value="F:structural constituent of ribosome"/>
    <property type="evidence" value="ECO:0007669"/>
    <property type="project" value="InterPro"/>
</dbReference>
<dbReference type="GO" id="GO:0000028">
    <property type="term" value="P:ribosomal small subunit assembly"/>
    <property type="evidence" value="ECO:0007669"/>
    <property type="project" value="TreeGrafter"/>
</dbReference>
<dbReference type="GO" id="GO:0006412">
    <property type="term" value="P:translation"/>
    <property type="evidence" value="ECO:0007669"/>
    <property type="project" value="UniProtKB-UniRule"/>
</dbReference>
<dbReference type="FunFam" id="3.30.860.10:FF:000001">
    <property type="entry name" value="30S ribosomal protein S19"/>
    <property type="match status" value="1"/>
</dbReference>
<dbReference type="Gene3D" id="3.30.860.10">
    <property type="entry name" value="30s Ribosomal Protein S19, Chain A"/>
    <property type="match status" value="1"/>
</dbReference>
<dbReference type="HAMAP" id="MF_00531">
    <property type="entry name" value="Ribosomal_uS19"/>
    <property type="match status" value="1"/>
</dbReference>
<dbReference type="InterPro" id="IPR002222">
    <property type="entry name" value="Ribosomal_uS19"/>
</dbReference>
<dbReference type="InterPro" id="IPR005732">
    <property type="entry name" value="Ribosomal_uS19_bac-type"/>
</dbReference>
<dbReference type="InterPro" id="IPR020934">
    <property type="entry name" value="Ribosomal_uS19_CS"/>
</dbReference>
<dbReference type="InterPro" id="IPR023575">
    <property type="entry name" value="Ribosomal_uS19_SF"/>
</dbReference>
<dbReference type="NCBIfam" id="TIGR01050">
    <property type="entry name" value="rpsS_bact"/>
    <property type="match status" value="1"/>
</dbReference>
<dbReference type="PANTHER" id="PTHR11880">
    <property type="entry name" value="RIBOSOMAL PROTEIN S19P FAMILY MEMBER"/>
    <property type="match status" value="1"/>
</dbReference>
<dbReference type="PANTHER" id="PTHR11880:SF8">
    <property type="entry name" value="SMALL RIBOSOMAL SUBUNIT PROTEIN US19M"/>
    <property type="match status" value="1"/>
</dbReference>
<dbReference type="Pfam" id="PF00203">
    <property type="entry name" value="Ribosomal_S19"/>
    <property type="match status" value="1"/>
</dbReference>
<dbReference type="PIRSF" id="PIRSF002144">
    <property type="entry name" value="Ribosomal_S19"/>
    <property type="match status" value="1"/>
</dbReference>
<dbReference type="PRINTS" id="PR00975">
    <property type="entry name" value="RIBOSOMALS19"/>
</dbReference>
<dbReference type="SUPFAM" id="SSF54570">
    <property type="entry name" value="Ribosomal protein S19"/>
    <property type="match status" value="1"/>
</dbReference>
<dbReference type="PROSITE" id="PS00323">
    <property type="entry name" value="RIBOSOMAL_S19"/>
    <property type="match status" value="1"/>
</dbReference>
<protein>
    <recommendedName>
        <fullName evidence="1">Small ribosomal subunit protein uS19</fullName>
    </recommendedName>
    <alternativeName>
        <fullName evidence="2">30S ribosomal protein S19</fullName>
    </alternativeName>
</protein>
<gene>
    <name evidence="1" type="primary">rpsS</name>
    <name type="ordered locus">NSE_0270</name>
</gene>
<accession>Q2GED5</accession>
<proteinExistence type="inferred from homology"/>